<reference key="1">
    <citation type="journal article" date="2015" name="Microbiology">
        <title>Genome of Methanoregula boonei 6A8 reveals adaptations to oligotrophic peatland environments.</title>
        <authorList>
            <person name="Braeuer S."/>
            <person name="Cadillo-Quiroz H."/>
            <person name="Kyrpides N."/>
            <person name="Woyke T."/>
            <person name="Goodwin L."/>
            <person name="Detter C."/>
            <person name="Podell S."/>
            <person name="Yavitt J.B."/>
            <person name="Zinder S.H."/>
        </authorList>
    </citation>
    <scope>NUCLEOTIDE SEQUENCE [LARGE SCALE GENOMIC DNA]</scope>
    <source>
        <strain>DSM 21154 / JCM 14090 / 6A8</strain>
    </source>
</reference>
<feature type="chain" id="PRO_1000081312" description="Large ribosomal subunit protein eL30">
    <location>
        <begin position="1"/>
        <end position="97"/>
    </location>
</feature>
<gene>
    <name evidence="1" type="primary">rpl30e</name>
    <name type="ordered locus">Mboo_1930</name>
</gene>
<name>RL30E_METB6</name>
<dbReference type="EMBL" id="CP000780">
    <property type="protein sequence ID" value="ABS56445.1"/>
    <property type="molecule type" value="Genomic_DNA"/>
</dbReference>
<dbReference type="RefSeq" id="WP_012107500.1">
    <property type="nucleotide sequence ID" value="NC_009712.1"/>
</dbReference>
<dbReference type="SMR" id="A7I9N4"/>
<dbReference type="STRING" id="456442.Mboo_1930"/>
<dbReference type="GeneID" id="5411015"/>
<dbReference type="KEGG" id="mbn:Mboo_1930"/>
<dbReference type="eggNOG" id="arCOG01752">
    <property type="taxonomic scope" value="Archaea"/>
</dbReference>
<dbReference type="HOGENOM" id="CLU_130502_1_1_2"/>
<dbReference type="OrthoDB" id="10759at2157"/>
<dbReference type="Proteomes" id="UP000002408">
    <property type="component" value="Chromosome"/>
</dbReference>
<dbReference type="GO" id="GO:0022625">
    <property type="term" value="C:cytosolic large ribosomal subunit"/>
    <property type="evidence" value="ECO:0007669"/>
    <property type="project" value="InterPro"/>
</dbReference>
<dbReference type="GO" id="GO:0003723">
    <property type="term" value="F:RNA binding"/>
    <property type="evidence" value="ECO:0007669"/>
    <property type="project" value="InterPro"/>
</dbReference>
<dbReference type="GO" id="GO:0003735">
    <property type="term" value="F:structural constituent of ribosome"/>
    <property type="evidence" value="ECO:0007669"/>
    <property type="project" value="InterPro"/>
</dbReference>
<dbReference type="GO" id="GO:0006412">
    <property type="term" value="P:translation"/>
    <property type="evidence" value="ECO:0007669"/>
    <property type="project" value="UniProtKB-UniRule"/>
</dbReference>
<dbReference type="Gene3D" id="3.30.1330.30">
    <property type="match status" value="1"/>
</dbReference>
<dbReference type="HAMAP" id="MF_00481">
    <property type="entry name" value="Ribosomal_eL30"/>
    <property type="match status" value="1"/>
</dbReference>
<dbReference type="InterPro" id="IPR000231">
    <property type="entry name" value="Ribosomal_eL30"/>
</dbReference>
<dbReference type="InterPro" id="IPR039109">
    <property type="entry name" value="Ribosomal_eL30-like"/>
</dbReference>
<dbReference type="InterPro" id="IPR029064">
    <property type="entry name" value="Ribosomal_eL30-like_sf"/>
</dbReference>
<dbReference type="InterPro" id="IPR004038">
    <property type="entry name" value="Ribosomal_eL8/eL30/eS12/Gad45"/>
</dbReference>
<dbReference type="NCBIfam" id="NF002172">
    <property type="entry name" value="PRK01018.1"/>
    <property type="match status" value="1"/>
</dbReference>
<dbReference type="PANTHER" id="PTHR11449">
    <property type="entry name" value="RIBOSOMAL PROTEIN L30"/>
    <property type="match status" value="1"/>
</dbReference>
<dbReference type="Pfam" id="PF01248">
    <property type="entry name" value="Ribosomal_L7Ae"/>
    <property type="match status" value="1"/>
</dbReference>
<dbReference type="SUPFAM" id="SSF55315">
    <property type="entry name" value="L30e-like"/>
    <property type="match status" value="1"/>
</dbReference>
<organism>
    <name type="scientific">Methanoregula boonei (strain DSM 21154 / JCM 14090 / 6A8)</name>
    <dbReference type="NCBI Taxonomy" id="456442"/>
    <lineage>
        <taxon>Archaea</taxon>
        <taxon>Methanobacteriati</taxon>
        <taxon>Methanobacteriota</taxon>
        <taxon>Stenosarchaea group</taxon>
        <taxon>Methanomicrobia</taxon>
        <taxon>Methanomicrobiales</taxon>
        <taxon>Methanoregulaceae</taxon>
        <taxon>Methanoregula</taxon>
    </lineage>
</organism>
<sequence length="97" mass="10437">MDFNASLRRAIKTGDVILGQNNTEKCIKEGKAQMVVIAANCPENFRSQLGSYENLFIHTFEGSSVALGKACGKPFMVSTLAIVSPGESDILSLKRTA</sequence>
<proteinExistence type="inferred from homology"/>
<evidence type="ECO:0000255" key="1">
    <source>
        <dbReference type="HAMAP-Rule" id="MF_00481"/>
    </source>
</evidence>
<evidence type="ECO:0000305" key="2"/>
<keyword id="KW-1185">Reference proteome</keyword>
<keyword id="KW-0687">Ribonucleoprotein</keyword>
<keyword id="KW-0689">Ribosomal protein</keyword>
<comment type="similarity">
    <text evidence="1">Belongs to the eukaryotic ribosomal protein eL30 family.</text>
</comment>
<accession>A7I9N4</accession>
<protein>
    <recommendedName>
        <fullName evidence="1">Large ribosomal subunit protein eL30</fullName>
    </recommendedName>
    <alternativeName>
        <fullName evidence="2">50S ribosomal protein L30e</fullName>
    </alternativeName>
</protein>